<gene>
    <name type="primary">UTP18</name>
    <name type="ordered locus">YJL069C</name>
    <name type="ORF">HRE594</name>
    <name type="ORF">J1098</name>
</gene>
<organism>
    <name type="scientific">Saccharomyces cerevisiae (strain ATCC 204508 / S288c)</name>
    <name type="common">Baker's yeast</name>
    <dbReference type="NCBI Taxonomy" id="559292"/>
    <lineage>
        <taxon>Eukaryota</taxon>
        <taxon>Fungi</taxon>
        <taxon>Dikarya</taxon>
        <taxon>Ascomycota</taxon>
        <taxon>Saccharomycotina</taxon>
        <taxon>Saccharomycetes</taxon>
        <taxon>Saccharomycetales</taxon>
        <taxon>Saccharomycetaceae</taxon>
        <taxon>Saccharomyces</taxon>
    </lineage>
</organism>
<protein>
    <recommendedName>
        <fullName>U3 small nucleolar RNA-associated protein 18</fullName>
        <shortName>U3 snoRNA-associated protein 18</shortName>
    </recommendedName>
    <alternativeName>
        <fullName>U three protein 18</fullName>
    </alternativeName>
</protein>
<accession>P40362</accession>
<accession>D6VWB4</accession>
<reference key="1">
    <citation type="journal article" date="1995" name="Yeast">
        <title>Sequence of a 17.1 kb DNA fragment from chromosome X of Saccharomyces cerevisiae includes the mitochondrial ribosomal protein L8.</title>
        <authorList>
            <person name="Vandenbol M."/>
            <person name="Durand P."/>
            <person name="Dion C."/>
            <person name="Portetelle D."/>
            <person name="Hilger F."/>
        </authorList>
    </citation>
    <scope>NUCLEOTIDE SEQUENCE [GENOMIC DNA]</scope>
    <source>
        <strain>ATCC 204508 / S288c</strain>
    </source>
</reference>
<reference key="2">
    <citation type="journal article" date="1996" name="EMBO J.">
        <title>Complete nucleotide sequence of Saccharomyces cerevisiae chromosome X.</title>
        <authorList>
            <person name="Galibert F."/>
            <person name="Alexandraki D."/>
            <person name="Baur A."/>
            <person name="Boles E."/>
            <person name="Chalwatzis N."/>
            <person name="Chuat J.-C."/>
            <person name="Coster F."/>
            <person name="Cziepluch C."/>
            <person name="de Haan M."/>
            <person name="Domdey H."/>
            <person name="Durand P."/>
            <person name="Entian K.-D."/>
            <person name="Gatius M."/>
            <person name="Goffeau A."/>
            <person name="Grivell L.A."/>
            <person name="Hennemann A."/>
            <person name="Herbert C.J."/>
            <person name="Heumann K."/>
            <person name="Hilger F."/>
            <person name="Hollenberg C.P."/>
            <person name="Huang M.-E."/>
            <person name="Jacq C."/>
            <person name="Jauniaux J.-C."/>
            <person name="Katsoulou C."/>
            <person name="Kirchrath L."/>
            <person name="Kleine K."/>
            <person name="Kordes E."/>
            <person name="Koetter P."/>
            <person name="Liebl S."/>
            <person name="Louis E.J."/>
            <person name="Manus V."/>
            <person name="Mewes H.-W."/>
            <person name="Miosga T."/>
            <person name="Obermaier B."/>
            <person name="Perea J."/>
            <person name="Pohl T.M."/>
            <person name="Portetelle D."/>
            <person name="Pujol A."/>
            <person name="Purnelle B."/>
            <person name="Ramezani Rad M."/>
            <person name="Rasmussen S.W."/>
            <person name="Rose M."/>
            <person name="Rossau R."/>
            <person name="Schaaff-Gerstenschlaeger I."/>
            <person name="Smits P.H.M."/>
            <person name="Scarcez T."/>
            <person name="Soriano N."/>
            <person name="To Van D."/>
            <person name="Tzermia M."/>
            <person name="Van Broekhoven A."/>
            <person name="Vandenbol M."/>
            <person name="Wedler H."/>
            <person name="von Wettstein D."/>
            <person name="Wambutt R."/>
            <person name="Zagulski M."/>
            <person name="Zollner A."/>
            <person name="Karpfinger-Hartl L."/>
        </authorList>
    </citation>
    <scope>NUCLEOTIDE SEQUENCE [LARGE SCALE GENOMIC DNA]</scope>
    <source>
        <strain>ATCC 204508 / S288c</strain>
    </source>
</reference>
<reference key="3">
    <citation type="journal article" date="2014" name="G3 (Bethesda)">
        <title>The reference genome sequence of Saccharomyces cerevisiae: Then and now.</title>
        <authorList>
            <person name="Engel S.R."/>
            <person name="Dietrich F.S."/>
            <person name="Fisk D.G."/>
            <person name="Binkley G."/>
            <person name="Balakrishnan R."/>
            <person name="Costanzo M.C."/>
            <person name="Dwight S.S."/>
            <person name="Hitz B.C."/>
            <person name="Karra K."/>
            <person name="Nash R.S."/>
            <person name="Weng S."/>
            <person name="Wong E.D."/>
            <person name="Lloyd P."/>
            <person name="Skrzypek M.S."/>
            <person name="Miyasato S.R."/>
            <person name="Simison M."/>
            <person name="Cherry J.M."/>
        </authorList>
    </citation>
    <scope>GENOME REANNOTATION</scope>
    <source>
        <strain>ATCC 204508 / S288c</strain>
    </source>
</reference>
<reference key="4">
    <citation type="journal article" date="2007" name="Genome Res.">
        <title>Approaching a complete repository of sequence-verified protein-encoding clones for Saccharomyces cerevisiae.</title>
        <authorList>
            <person name="Hu Y."/>
            <person name="Rolfs A."/>
            <person name="Bhullar B."/>
            <person name="Murthy T.V.S."/>
            <person name="Zhu C."/>
            <person name="Berger M.F."/>
            <person name="Camargo A.A."/>
            <person name="Kelley F."/>
            <person name="McCarron S."/>
            <person name="Jepson D."/>
            <person name="Richardson A."/>
            <person name="Raphael J."/>
            <person name="Moreira D."/>
            <person name="Taycher E."/>
            <person name="Zuo D."/>
            <person name="Mohr S."/>
            <person name="Kane M.F."/>
            <person name="Williamson J."/>
            <person name="Simpson A.J.G."/>
            <person name="Bulyk M.L."/>
            <person name="Harlow E."/>
            <person name="Marsischky G."/>
            <person name="Kolodner R.D."/>
            <person name="LaBaer J."/>
        </authorList>
    </citation>
    <scope>NUCLEOTIDE SEQUENCE [GENOMIC DNA]</scope>
    <source>
        <strain>ATCC 204508 / S288c</strain>
    </source>
</reference>
<reference key="5">
    <citation type="journal article" date="2003" name="Nature">
        <title>Global analysis of protein localization in budding yeast.</title>
        <authorList>
            <person name="Huh W.-K."/>
            <person name="Falvo J.V."/>
            <person name="Gerke L.C."/>
            <person name="Carroll A.S."/>
            <person name="Howson R.W."/>
            <person name="Weissman J.S."/>
            <person name="O'Shea E.K."/>
        </authorList>
    </citation>
    <scope>SUBCELLULAR LOCATION [LARGE SCALE ANALYSIS]</scope>
</reference>
<reference key="6">
    <citation type="journal article" date="2003" name="Nature">
        <title>Global analysis of protein expression in yeast.</title>
        <authorList>
            <person name="Ghaemmaghami S."/>
            <person name="Huh W.-K."/>
            <person name="Bower K."/>
            <person name="Howson R.W."/>
            <person name="Belle A."/>
            <person name="Dephoure N."/>
            <person name="O'Shea E.K."/>
            <person name="Weissman J.S."/>
        </authorList>
    </citation>
    <scope>LEVEL OF PROTEIN EXPRESSION [LARGE SCALE ANALYSIS]</scope>
</reference>
<reference key="7">
    <citation type="journal article" date="2004" name="Eukaryot. Cell">
        <title>The small-subunit processome is a ribosome assembly intermediate.</title>
        <authorList>
            <person name="Bernstein K.A."/>
            <person name="Gallagher J.E.G."/>
            <person name="Mitchell B.M."/>
            <person name="Granneman S."/>
            <person name="Baserga S.J."/>
        </authorList>
    </citation>
    <scope>FUNCTION</scope>
    <scope>INTERACTION WITH MPP10 AND SNORNA U3</scope>
    <scope>IDENTIFICATION IN SSU PROCESSOME</scope>
    <scope>SUBCELLULAR LOCATION</scope>
</reference>
<reference key="8">
    <citation type="journal article" date="2009" name="Science">
        <title>Global analysis of Cdk1 substrate phosphorylation sites provides insights into evolution.</title>
        <authorList>
            <person name="Holt L.J."/>
            <person name="Tuch B.B."/>
            <person name="Villen J."/>
            <person name="Johnson A.D."/>
            <person name="Gygi S.P."/>
            <person name="Morgan D.O."/>
        </authorList>
    </citation>
    <scope>PHOSPHORYLATION [LARGE SCALE ANALYSIS] AT SER-182 AND SER-184</scope>
    <scope>IDENTIFICATION BY MASS SPECTROMETRY [LARGE SCALE ANALYSIS]</scope>
</reference>
<reference key="9">
    <citation type="journal article" date="2010" name="RNA">
        <title>The DEAD-box RNA helicase-like Utp25 is an SSU processome component.</title>
        <authorList>
            <person name="Charette J.M."/>
            <person name="Baserga S.J."/>
        </authorList>
    </citation>
    <scope>INTERACTION WITH UTP25</scope>
</reference>
<reference key="10">
    <citation type="journal article" date="2014" name="PLoS ONE">
        <title>Structure of Utp21 tandem WD domain provides insight into the organization of the UTPB complex involved in ribosome synthesis.</title>
        <authorList>
            <person name="Zhang C."/>
            <person name="Lin J."/>
            <person name="Liu W."/>
            <person name="Chen X."/>
            <person name="Chen R."/>
            <person name="Ye K."/>
        </authorList>
    </citation>
    <scope>INTERACTION WITH UTP21</scope>
</reference>
<sequence length="594" mass="66424">MTMATTAMNVSVPPPDEEEQLLAKFVFGDTTDLQENLAKFNADFIFNEQEMDVEDQEDEGSESDNSEEDEAQNGELDHVNNDQLFFVDDGGNEDSQDKNEDTMDVDDEDDSSSDDYSEDSEEAAWIDSDDEKIKVPILVTNKTKKLRTSYNESKINGVHYINRLRSQFEKIYPRPKWVDDESDSELDDEEDDEEEGSNNVINGDINALTKILSTTYNYKDTLSNSKLLPPKKLDIVRLKDANASHPSHSAIQSLSFHPSKPLLLTGGYDKTLRIYHIDGKTNHLVTSLHLVGSPIQTCTFYTSLSNQNQQNIFTAGRRRYMHSWDLSLENLTHSQTAKIEKFSRLYGHESTQRSFENFKVAHLQNSQTNSVHGIVLLQGNNGWINILHSTSGLWLMGCKIEGVITDFCIDYQPISRGKFRTILIAVNAYGEVWEFDLNKNGHVIRRWKDQGGVGITKIQVGGGTTTTCPALQISKIKQNRWLAVGSESGFVNLYDRNNAMTSSTPTPVAALDQLTTTISNLQFSPDGQILCMASRAVKDALRLVHLPSCSVFSNWPTSGTPLGKVTSVAFSPSGGLLAVGNEQGKVRLWKLNHY</sequence>
<dbReference type="EMBL" id="Z34288">
    <property type="protein sequence ID" value="CAA84053.1"/>
    <property type="molecule type" value="Genomic_DNA"/>
</dbReference>
<dbReference type="EMBL" id="Z49344">
    <property type="protein sequence ID" value="CAA89360.1"/>
    <property type="molecule type" value="Genomic_DNA"/>
</dbReference>
<dbReference type="EMBL" id="X88851">
    <property type="protein sequence ID" value="CAA61308.1"/>
    <property type="molecule type" value="Genomic_DNA"/>
</dbReference>
<dbReference type="EMBL" id="AY692560">
    <property type="protein sequence ID" value="AAT92579.1"/>
    <property type="molecule type" value="Genomic_DNA"/>
</dbReference>
<dbReference type="EMBL" id="BK006943">
    <property type="protein sequence ID" value="DAA08730.1"/>
    <property type="molecule type" value="Genomic_DNA"/>
</dbReference>
<dbReference type="PIR" id="S50802">
    <property type="entry name" value="S50802"/>
</dbReference>
<dbReference type="RefSeq" id="NP_012466.1">
    <property type="nucleotide sequence ID" value="NM_001181502.1"/>
</dbReference>
<dbReference type="PDB" id="5WLC">
    <property type="method" value="EM"/>
    <property type="resolution" value="3.80 A"/>
    <property type="chains" value="LS=1-594"/>
</dbReference>
<dbReference type="PDB" id="5WYJ">
    <property type="method" value="EM"/>
    <property type="resolution" value="8.70 A"/>
    <property type="chains" value="BD=1-594"/>
</dbReference>
<dbReference type="PDB" id="5WYK">
    <property type="method" value="EM"/>
    <property type="resolution" value="4.50 A"/>
    <property type="chains" value="BD=1-594"/>
</dbReference>
<dbReference type="PDB" id="6KE6">
    <property type="method" value="EM"/>
    <property type="resolution" value="3.40 A"/>
    <property type="chains" value="B8=1-594"/>
</dbReference>
<dbReference type="PDB" id="6LQP">
    <property type="method" value="EM"/>
    <property type="resolution" value="3.20 A"/>
    <property type="chains" value="B8=1-594"/>
</dbReference>
<dbReference type="PDB" id="6LQQ">
    <property type="method" value="EM"/>
    <property type="resolution" value="4.10 A"/>
    <property type="chains" value="B8=1-594"/>
</dbReference>
<dbReference type="PDB" id="6LQR">
    <property type="method" value="EM"/>
    <property type="resolution" value="8.60 A"/>
    <property type="chains" value="B8=1-594"/>
</dbReference>
<dbReference type="PDB" id="6LQS">
    <property type="method" value="EM"/>
    <property type="resolution" value="3.80 A"/>
    <property type="chains" value="B8=1-594"/>
</dbReference>
<dbReference type="PDB" id="6LQT">
    <property type="method" value="EM"/>
    <property type="resolution" value="4.90 A"/>
    <property type="chains" value="B8=1-594"/>
</dbReference>
<dbReference type="PDB" id="6LQU">
    <property type="method" value="EM"/>
    <property type="resolution" value="3.70 A"/>
    <property type="chains" value="B8=1-594"/>
</dbReference>
<dbReference type="PDB" id="6LQV">
    <property type="method" value="EM"/>
    <property type="resolution" value="4.80 A"/>
    <property type="chains" value="B8=1-594"/>
</dbReference>
<dbReference type="PDB" id="6ND4">
    <property type="method" value="EM"/>
    <property type="resolution" value="4.30 A"/>
    <property type="chains" value="S=1-594"/>
</dbReference>
<dbReference type="PDB" id="6ZQA">
    <property type="method" value="EM"/>
    <property type="resolution" value="4.40 A"/>
    <property type="chains" value="UR=1-594"/>
</dbReference>
<dbReference type="PDB" id="6ZQB">
    <property type="method" value="EM"/>
    <property type="resolution" value="3.90 A"/>
    <property type="chains" value="UR=1-594"/>
</dbReference>
<dbReference type="PDB" id="6ZQC">
    <property type="method" value="EM"/>
    <property type="resolution" value="3.80 A"/>
    <property type="chains" value="UR=1-594"/>
</dbReference>
<dbReference type="PDB" id="6ZQD">
    <property type="method" value="EM"/>
    <property type="resolution" value="3.80 A"/>
    <property type="chains" value="UR=1-594"/>
</dbReference>
<dbReference type="PDB" id="6ZQE">
    <property type="method" value="EM"/>
    <property type="resolution" value="7.10 A"/>
    <property type="chains" value="UR=1-594"/>
</dbReference>
<dbReference type="PDB" id="7AJT">
    <property type="method" value="EM"/>
    <property type="resolution" value="4.60 A"/>
    <property type="chains" value="UR=1-594"/>
</dbReference>
<dbReference type="PDB" id="7AJU">
    <property type="method" value="EM"/>
    <property type="resolution" value="3.80 A"/>
    <property type="chains" value="UR=1-594"/>
</dbReference>
<dbReference type="PDB" id="7D4I">
    <property type="method" value="EM"/>
    <property type="resolution" value="4.00 A"/>
    <property type="chains" value="B8=1-594"/>
</dbReference>
<dbReference type="PDB" id="7D5S">
    <property type="method" value="EM"/>
    <property type="resolution" value="4.60 A"/>
    <property type="chains" value="B8=1-594"/>
</dbReference>
<dbReference type="PDB" id="7D5T">
    <property type="method" value="EM"/>
    <property type="resolution" value="6.00 A"/>
    <property type="chains" value="B8=1-594"/>
</dbReference>
<dbReference type="PDB" id="7D63">
    <property type="method" value="EM"/>
    <property type="resolution" value="12.30 A"/>
    <property type="chains" value="B8=1-594"/>
</dbReference>
<dbReference type="PDB" id="7SUK">
    <property type="method" value="EM"/>
    <property type="resolution" value="3.99 A"/>
    <property type="chains" value="LS=1-594"/>
</dbReference>
<dbReference type="PDBsum" id="5WLC"/>
<dbReference type="PDBsum" id="5WYJ"/>
<dbReference type="PDBsum" id="5WYK"/>
<dbReference type="PDBsum" id="6KE6"/>
<dbReference type="PDBsum" id="6LQP"/>
<dbReference type="PDBsum" id="6LQQ"/>
<dbReference type="PDBsum" id="6LQR"/>
<dbReference type="PDBsum" id="6LQS"/>
<dbReference type="PDBsum" id="6LQT"/>
<dbReference type="PDBsum" id="6LQU"/>
<dbReference type="PDBsum" id="6LQV"/>
<dbReference type="PDBsum" id="6ND4"/>
<dbReference type="PDBsum" id="6ZQA"/>
<dbReference type="PDBsum" id="6ZQB"/>
<dbReference type="PDBsum" id="6ZQC"/>
<dbReference type="PDBsum" id="6ZQD"/>
<dbReference type="PDBsum" id="6ZQE"/>
<dbReference type="PDBsum" id="7AJT"/>
<dbReference type="PDBsum" id="7AJU"/>
<dbReference type="PDBsum" id="7D4I"/>
<dbReference type="PDBsum" id="7D5S"/>
<dbReference type="PDBsum" id="7D5T"/>
<dbReference type="PDBsum" id="7D63"/>
<dbReference type="PDBsum" id="7SUK"/>
<dbReference type="EMDB" id="EMD-0441"/>
<dbReference type="EMDB" id="EMD-0949"/>
<dbReference type="EMDB" id="EMD-0950"/>
<dbReference type="EMDB" id="EMD-0951"/>
<dbReference type="EMDB" id="EMD-0952"/>
<dbReference type="EMDB" id="EMD-0953"/>
<dbReference type="EMDB" id="EMD-0954"/>
<dbReference type="EMDB" id="EMD-0955"/>
<dbReference type="EMDB" id="EMD-11357"/>
<dbReference type="EMDB" id="EMD-11358"/>
<dbReference type="EMDB" id="EMD-11359"/>
<dbReference type="EMDB" id="EMD-11360"/>
<dbReference type="EMDB" id="EMD-11361"/>
<dbReference type="EMDB" id="EMD-11807"/>
<dbReference type="EMDB" id="EMD-11808"/>
<dbReference type="EMDB" id="EMD-25441"/>
<dbReference type="EMDB" id="EMD-30574"/>
<dbReference type="EMDB" id="EMD-30584"/>
<dbReference type="EMDB" id="EMD-30585"/>
<dbReference type="EMDB" id="EMD-30588"/>
<dbReference type="EMDB" id="EMD-6695"/>
<dbReference type="EMDB" id="EMD-6696"/>
<dbReference type="EMDB" id="EMD-8859"/>
<dbReference type="EMDB" id="EMD-9964"/>
<dbReference type="SMR" id="P40362"/>
<dbReference type="BioGRID" id="33686">
    <property type="interactions" value="225"/>
</dbReference>
<dbReference type="ComplexPortal" id="CPX-1410">
    <property type="entry name" value="UTP-B complex"/>
</dbReference>
<dbReference type="DIP" id="DIP-6392N"/>
<dbReference type="FunCoup" id="P40362">
    <property type="interactions" value="1284"/>
</dbReference>
<dbReference type="IntAct" id="P40362">
    <property type="interactions" value="98"/>
</dbReference>
<dbReference type="MINT" id="P40362"/>
<dbReference type="STRING" id="4932.YJL069C"/>
<dbReference type="iPTMnet" id="P40362"/>
<dbReference type="PaxDb" id="4932-YJL069C"/>
<dbReference type="PeptideAtlas" id="P40362"/>
<dbReference type="EnsemblFungi" id="YJL069C_mRNA">
    <property type="protein sequence ID" value="YJL069C"/>
    <property type="gene ID" value="YJL069C"/>
</dbReference>
<dbReference type="GeneID" id="853376"/>
<dbReference type="KEGG" id="sce:YJL069C"/>
<dbReference type="AGR" id="SGD:S000003605"/>
<dbReference type="SGD" id="S000003605">
    <property type="gene designation" value="UTP18"/>
</dbReference>
<dbReference type="VEuPathDB" id="FungiDB:YJL069C"/>
<dbReference type="eggNOG" id="KOG2055">
    <property type="taxonomic scope" value="Eukaryota"/>
</dbReference>
<dbReference type="GeneTree" id="ENSGT00940000165670"/>
<dbReference type="HOGENOM" id="CLU_011055_1_0_1"/>
<dbReference type="InParanoid" id="P40362"/>
<dbReference type="OMA" id="KIRMWEI"/>
<dbReference type="OrthoDB" id="1935146at2759"/>
<dbReference type="BioCyc" id="YEAST:G3O-31528-MONOMER"/>
<dbReference type="Reactome" id="R-SCE-6791226">
    <property type="pathway name" value="Major pathway of rRNA processing in the nucleolus and cytosol"/>
</dbReference>
<dbReference type="BioGRID-ORCS" id="853376">
    <property type="hits" value="9 hits in 10 CRISPR screens"/>
</dbReference>
<dbReference type="CD-CODE" id="BDAE0F88">
    <property type="entry name" value="Nucleolus"/>
</dbReference>
<dbReference type="PRO" id="PR:P40362"/>
<dbReference type="Proteomes" id="UP000002311">
    <property type="component" value="Chromosome X"/>
</dbReference>
<dbReference type="RNAct" id="P40362">
    <property type="molecule type" value="protein"/>
</dbReference>
<dbReference type="GO" id="GO:0030686">
    <property type="term" value="C:90S preribosome"/>
    <property type="evidence" value="ECO:0007005"/>
    <property type="project" value="SGD"/>
</dbReference>
<dbReference type="GO" id="GO:0005730">
    <property type="term" value="C:nucleolus"/>
    <property type="evidence" value="ECO:0000314"/>
    <property type="project" value="SGD"/>
</dbReference>
<dbReference type="GO" id="GO:0005654">
    <property type="term" value="C:nucleoplasm"/>
    <property type="evidence" value="ECO:0000304"/>
    <property type="project" value="Reactome"/>
</dbReference>
<dbReference type="GO" id="GO:0034388">
    <property type="term" value="C:Pwp2p-containing subcomplex of 90S preribosome"/>
    <property type="evidence" value="ECO:0000314"/>
    <property type="project" value="SGD"/>
</dbReference>
<dbReference type="GO" id="GO:0032040">
    <property type="term" value="C:small-subunit processome"/>
    <property type="evidence" value="ECO:0000314"/>
    <property type="project" value="SGD"/>
</dbReference>
<dbReference type="GO" id="GO:0000480">
    <property type="term" value="P:endonucleolytic cleavage in 5'-ETS of tricistronic rRNA transcript (SSU-rRNA, 5.8S rRNA, LSU-rRNA)"/>
    <property type="evidence" value="ECO:0000315"/>
    <property type="project" value="SGD"/>
</dbReference>
<dbReference type="GO" id="GO:0000447">
    <property type="term" value="P:endonucleolytic cleavage in ITS1 to separate SSU-rRNA from 5.8S rRNA and LSU-rRNA from tricistronic rRNA transcript (SSU-rRNA, 5.8S rRNA, LSU-rRNA)"/>
    <property type="evidence" value="ECO:0000315"/>
    <property type="project" value="SGD"/>
</dbReference>
<dbReference type="GO" id="GO:0000472">
    <property type="term" value="P:endonucleolytic cleavage to generate mature 5'-end of SSU-rRNA from (SSU-rRNA, 5.8S rRNA, LSU-rRNA)"/>
    <property type="evidence" value="ECO:0000315"/>
    <property type="project" value="SGD"/>
</dbReference>
<dbReference type="GO" id="GO:0030490">
    <property type="term" value="P:maturation of SSU-rRNA"/>
    <property type="evidence" value="ECO:0000303"/>
    <property type="project" value="ComplexPortal"/>
</dbReference>
<dbReference type="GO" id="GO:0000292">
    <property type="term" value="P:RNA fragment catabolic process"/>
    <property type="evidence" value="ECO:0000315"/>
    <property type="project" value="CACAO"/>
</dbReference>
<dbReference type="FunFam" id="2.130.10.10:FF:000660">
    <property type="entry name" value="U3 snoRNP protein"/>
    <property type="match status" value="1"/>
</dbReference>
<dbReference type="Gene3D" id="2.130.10.10">
    <property type="entry name" value="YVTN repeat-like/Quinoprotein amine dehydrogenase"/>
    <property type="match status" value="1"/>
</dbReference>
<dbReference type="InterPro" id="IPR045161">
    <property type="entry name" value="Utp18"/>
</dbReference>
<dbReference type="InterPro" id="IPR015943">
    <property type="entry name" value="WD40/YVTN_repeat-like_dom_sf"/>
</dbReference>
<dbReference type="InterPro" id="IPR036322">
    <property type="entry name" value="WD40_repeat_dom_sf"/>
</dbReference>
<dbReference type="InterPro" id="IPR001680">
    <property type="entry name" value="WD40_rpt"/>
</dbReference>
<dbReference type="PANTHER" id="PTHR18359:SF0">
    <property type="entry name" value="U3 SMALL NUCLEOLAR RNA-ASSOCIATED PROTEIN 18 HOMOLOG"/>
    <property type="match status" value="1"/>
</dbReference>
<dbReference type="PANTHER" id="PTHR18359">
    <property type="entry name" value="WD-REPEAT PROTEIN-RELATED"/>
    <property type="match status" value="1"/>
</dbReference>
<dbReference type="Pfam" id="PF00400">
    <property type="entry name" value="WD40"/>
    <property type="match status" value="2"/>
</dbReference>
<dbReference type="SMART" id="SM00320">
    <property type="entry name" value="WD40"/>
    <property type="match status" value="3"/>
</dbReference>
<dbReference type="SUPFAM" id="SSF50978">
    <property type="entry name" value="WD40 repeat-like"/>
    <property type="match status" value="1"/>
</dbReference>
<dbReference type="PROSITE" id="PS50082">
    <property type="entry name" value="WD_REPEATS_2"/>
    <property type="match status" value="2"/>
</dbReference>
<dbReference type="PROSITE" id="PS50294">
    <property type="entry name" value="WD_REPEATS_REGION"/>
    <property type="match status" value="2"/>
</dbReference>
<keyword id="KW-0002">3D-structure</keyword>
<keyword id="KW-0539">Nucleus</keyword>
<keyword id="KW-0597">Phosphoprotein</keyword>
<keyword id="KW-1185">Reference proteome</keyword>
<keyword id="KW-0677">Repeat</keyword>
<keyword id="KW-0687">Ribonucleoprotein</keyword>
<keyword id="KW-0690">Ribosome biogenesis</keyword>
<keyword id="KW-0698">rRNA processing</keyword>
<keyword id="KW-0853">WD repeat</keyword>
<evidence type="ECO:0000256" key="1">
    <source>
        <dbReference type="SAM" id="MobiDB-lite"/>
    </source>
</evidence>
<evidence type="ECO:0000269" key="2">
    <source>
    </source>
</evidence>
<evidence type="ECO:0000269" key="3">
    <source>
    </source>
</evidence>
<evidence type="ECO:0000269" key="4">
    <source>
    </source>
</evidence>
<evidence type="ECO:0000269" key="5">
    <source>
    </source>
</evidence>
<evidence type="ECO:0000269" key="6">
    <source>
    </source>
</evidence>
<evidence type="ECO:0000305" key="7"/>
<evidence type="ECO:0007744" key="8">
    <source>
    </source>
</evidence>
<feature type="chain" id="PRO_0000051330" description="U3 small nucleolar RNA-associated protein 18">
    <location>
        <begin position="1"/>
        <end position="594"/>
    </location>
</feature>
<feature type="repeat" description="WD 1">
    <location>
        <begin position="246"/>
        <end position="285"/>
    </location>
</feature>
<feature type="repeat" description="WD 2">
    <location>
        <begin position="290"/>
        <end position="334"/>
    </location>
</feature>
<feature type="repeat" description="WD 3">
    <location>
        <begin position="463"/>
        <end position="504"/>
    </location>
</feature>
<feature type="repeat" description="WD 4">
    <location>
        <begin position="513"/>
        <end position="554"/>
    </location>
</feature>
<feature type="repeat" description="WD 5">
    <location>
        <begin position="560"/>
        <end position="593"/>
    </location>
</feature>
<feature type="region of interest" description="Disordered" evidence="1">
    <location>
        <begin position="48"/>
        <end position="128"/>
    </location>
</feature>
<feature type="region of interest" description="Interaction with UTP21" evidence="6">
    <location>
        <begin position="101"/>
        <end position="190"/>
    </location>
</feature>
<feature type="region of interest" description="Disordered" evidence="1">
    <location>
        <begin position="176"/>
        <end position="200"/>
    </location>
</feature>
<feature type="compositionally biased region" description="Acidic residues" evidence="1">
    <location>
        <begin position="49"/>
        <end position="72"/>
    </location>
</feature>
<feature type="compositionally biased region" description="Acidic residues" evidence="1">
    <location>
        <begin position="102"/>
        <end position="128"/>
    </location>
</feature>
<feature type="compositionally biased region" description="Acidic residues" evidence="1">
    <location>
        <begin position="180"/>
        <end position="196"/>
    </location>
</feature>
<feature type="modified residue" description="Phosphoserine" evidence="8">
    <location>
        <position position="182"/>
    </location>
</feature>
<feature type="modified residue" description="Phosphoserine" evidence="8">
    <location>
        <position position="184"/>
    </location>
</feature>
<name>UTP18_YEAST</name>
<proteinExistence type="evidence at protein level"/>
<comment type="function">
    <text evidence="4">Involved in nucleolar processing of pre-18S ribosomal RNA and ribosome assembly.</text>
</comment>
<comment type="subunit">
    <text evidence="4 5 6">Interacts with snoRNA U3. Interacts with MPP10, UTP21 and UTP25. Component of the ribosomal small subunit (SSU) processome composed of at least 40 protein subunits and snoRNA U3.</text>
</comment>
<comment type="interaction">
    <interactant intactId="EBI-4534">
        <id>P40362</id>
    </interactant>
    <interactant intactId="EBI-9533">
        <id>P15790</id>
        <label>CKA1</label>
    </interactant>
    <organismsDiffer>false</organismsDiffer>
    <experiments>3</experiments>
</comment>
<comment type="interaction">
    <interactant intactId="EBI-4534">
        <id>P40362</id>
    </interactant>
    <interactant intactId="EBI-5844">
        <id>P36009</id>
        <label>DHR2</label>
    </interactant>
    <organismsDiffer>false</organismsDiffer>
    <experiments>2</experiments>
</comment>
<comment type="interaction">
    <interactant intactId="EBI-4534">
        <id>P40362</id>
    </interactant>
    <interactant intactId="EBI-5612">
        <id>P20448</id>
        <label>HCA4</label>
    </interactant>
    <organismsDiffer>false</organismsDiffer>
    <experiments>3</experiments>
</comment>
<comment type="interaction">
    <interactant intactId="EBI-4534">
        <id>P40362</id>
    </interactant>
    <interactant intactId="EBI-9237">
        <id>P32899</id>
        <label>IMP3</label>
    </interactant>
    <organismsDiffer>false</organismsDiffer>
    <experiments>3</experiments>
</comment>
<comment type="interaction">
    <interactant intactId="EBI-4534">
        <id>P40362</id>
    </interactant>
    <interactant intactId="EBI-28914">
        <id>P53914</id>
        <label>KRE33</label>
    </interactant>
    <organismsDiffer>false</organismsDiffer>
    <experiments>3</experiments>
</comment>
<comment type="interaction">
    <interactant intactId="EBI-4534">
        <id>P40362</id>
    </interactant>
    <interactant intactId="EBI-21773">
        <id>P25586</id>
        <label>KRR1</label>
    </interactant>
    <organismsDiffer>false</organismsDiffer>
    <experiments>3</experiments>
</comment>
<comment type="interaction">
    <interactant intactId="EBI-4534">
        <id>P40362</id>
    </interactant>
    <interactant intactId="EBI-10103">
        <id>P40079</id>
        <label>LCP5</label>
    </interactant>
    <organismsDiffer>false</organismsDiffer>
    <experiments>3</experiments>
</comment>
<comment type="interaction">
    <interactant intactId="EBI-4534">
        <id>P40362</id>
    </interactant>
    <interactant intactId="EBI-14332">
        <id>P25635</id>
        <label>PWP2</label>
    </interactant>
    <organismsDiffer>false</organismsDiffer>
    <experiments>15</experiments>
</comment>
<comment type="interaction">
    <interactant intactId="EBI-4534">
        <id>P40362</id>
    </interactant>
    <interactant intactId="EBI-359">
        <id>Q06078</id>
        <label>UTP21</label>
    </interactant>
    <organismsDiffer>false</organismsDiffer>
    <experiments>12</experiments>
</comment>
<comment type="interaction">
    <interactant intactId="EBI-4534">
        <id>P40362</id>
    </interactant>
    <interactant intactId="EBI-1878">
        <id>P53254</id>
        <label>UTP22</label>
    </interactant>
    <organismsDiffer>false</organismsDiffer>
    <experiments>5</experiments>
</comment>
<comment type="interaction">
    <interactant intactId="EBI-4534">
        <id>P40362</id>
    </interactant>
    <interactant intactId="EBI-26459">
        <id>P36144</id>
        <label>UTP30</label>
    </interactant>
    <organismsDiffer>false</organismsDiffer>
    <experiments>3</experiments>
</comment>
<comment type="interaction">
    <interactant intactId="EBI-4534">
        <id>P40362</id>
    </interactant>
    <interactant intactId="EBI-35712">
        <id>Q06679</id>
        <label>UTP4</label>
    </interactant>
    <organismsDiffer>false</organismsDiffer>
    <experiments>5</experiments>
</comment>
<comment type="interaction">
    <interactant intactId="EBI-4534">
        <id>P40362</id>
    </interactant>
    <interactant intactId="EBI-22119">
        <id>Q02354</id>
        <label>UTP6</label>
    </interactant>
    <organismsDiffer>false</organismsDiffer>
    <experiments>12</experiments>
</comment>
<comment type="subcellular location">
    <subcellularLocation>
        <location evidence="2 4">Nucleus</location>
        <location evidence="2 4">Nucleolus</location>
    </subcellularLocation>
</comment>
<comment type="miscellaneous">
    <text evidence="3">Present with 9570 molecules/cell in log phase SD medium.</text>
</comment>
<comment type="similarity">
    <text evidence="7">Belongs to the WD repeat UTP18 family.</text>
</comment>